<proteinExistence type="evidence at transcript level"/>
<keyword id="KW-0202">Cytokine</keyword>
<keyword id="KW-1015">Disulfide bond</keyword>
<keyword id="KW-0325">Glycoprotein</keyword>
<keyword id="KW-0393">Immunoglobulin domain</keyword>
<keyword id="KW-1185">Reference proteome</keyword>
<keyword id="KW-0964">Secreted</keyword>
<keyword id="KW-0732">Signal</keyword>
<protein>
    <recommendedName>
        <fullName>Interleukin-12 subunit beta</fullName>
        <shortName>IL-12B</shortName>
    </recommendedName>
    <alternativeName>
        <fullName>Cytotoxic lymphocyte maturation factor 40 kDa subunit</fullName>
        <shortName>CLMF p40</shortName>
    </alternativeName>
    <alternativeName>
        <fullName>IL-12 subunit p40</fullName>
    </alternativeName>
</protein>
<sequence>MHPQQLVVSWFSLVLLASPIVAIWELEKNVYVVELDWYPNAPGETVVLTCDTPEEDGITWTSDQSSEVLGSGKTLTIQVKEFGDAGQYTCHKGGEVLSRSLLLLHKKEDGIWSTDILKDQKEPKAKSFLKCEAKDYSGHFTCSWLTAISTNLKFSVKSSRGSSDPRGVTCGAASLSAEKVSMDHREYNKYTVECQEGSACPAAEESLPIEVVMEAVHKLKYENYTSSFFIRDIIKPDPPKNLQLRPLKNSRQVEVSWEYPDTWSTPHSYFSLTFCVQVQGKNKREKKLFTDQTSAKVTCHKDANIRVQARDRYYSSFWSEWASVSCS</sequence>
<accession>P68221</accession>
<accession>O02815</accession>
<accession>O18989</accession>
<accession>Q9TT18</accession>
<name>IL12B_CAPHI</name>
<feature type="signal peptide" evidence="4">
    <location>
        <begin position="1"/>
        <end position="22"/>
    </location>
</feature>
<feature type="chain" id="PRO_0000010925" description="Interleukin-12 subunit beta">
    <location>
        <begin position="23"/>
        <end position="327"/>
    </location>
</feature>
<feature type="domain" description="Ig-like C2-type">
    <location>
        <begin position="23"/>
        <end position="106"/>
    </location>
</feature>
<feature type="domain" description="Fibronectin type-III" evidence="6">
    <location>
        <begin position="238"/>
        <end position="327"/>
    </location>
</feature>
<feature type="glycosylation site" description="N-linked (GlcNAc...) asparagine" evidence="4">
    <location>
        <position position="223"/>
    </location>
</feature>
<feature type="disulfide bond" evidence="5">
    <location>
        <begin position="50"/>
        <end position="90"/>
    </location>
</feature>
<feature type="disulfide bond" description="Interchain (with C-98 in IL12A and C-74 in IL23A)" evidence="2 5">
    <location>
        <position position="200"/>
    </location>
</feature>
<evidence type="ECO:0000250" key="1"/>
<evidence type="ECO:0000250" key="2">
    <source>
        <dbReference type="UniProtKB" id="P29460"/>
    </source>
</evidence>
<evidence type="ECO:0000250" key="3">
    <source>
        <dbReference type="UniProtKB" id="P43432"/>
    </source>
</evidence>
<evidence type="ECO:0000255" key="4"/>
<evidence type="ECO:0000255" key="5">
    <source>
        <dbReference type="PROSITE-ProRule" id="PRU00114"/>
    </source>
</evidence>
<evidence type="ECO:0000255" key="6">
    <source>
        <dbReference type="PROSITE-ProRule" id="PRU00316"/>
    </source>
</evidence>
<evidence type="ECO:0000305" key="7"/>
<gene>
    <name type="primary">IL12B</name>
</gene>
<reference key="1">
    <citation type="submission" date="1997-06" db="EMBL/GenBank/DDBJ databases">
        <title>Cloning of caprine IL-12 40 kDa subunit.</title>
        <authorList>
            <person name="Beyer J.C."/>
            <person name="Cheevers W.P."/>
            <person name="Kumpula-Mcwhirter N.M."/>
        </authorList>
    </citation>
    <scope>NUCLEOTIDE SEQUENCE [MRNA]</scope>
</reference>
<organism>
    <name type="scientific">Capra hircus</name>
    <name type="common">Goat</name>
    <dbReference type="NCBI Taxonomy" id="9925"/>
    <lineage>
        <taxon>Eukaryota</taxon>
        <taxon>Metazoa</taxon>
        <taxon>Chordata</taxon>
        <taxon>Craniata</taxon>
        <taxon>Vertebrata</taxon>
        <taxon>Euteleostomi</taxon>
        <taxon>Mammalia</taxon>
        <taxon>Eutheria</taxon>
        <taxon>Laurasiatheria</taxon>
        <taxon>Artiodactyla</taxon>
        <taxon>Ruminantia</taxon>
        <taxon>Pecora</taxon>
        <taxon>Bovidae</taxon>
        <taxon>Caprinae</taxon>
        <taxon>Capra</taxon>
    </lineage>
</organism>
<dbReference type="EMBL" id="AF007576">
    <property type="protein sequence ID" value="AAB62945.1"/>
    <property type="molecule type" value="mRNA"/>
</dbReference>
<dbReference type="RefSeq" id="NP_001272629.1">
    <property type="nucleotide sequence ID" value="NM_001285700.1"/>
</dbReference>
<dbReference type="SMR" id="P68221"/>
<dbReference type="STRING" id="9925.ENSCHIP00000017015"/>
<dbReference type="GlyCosmos" id="P68221">
    <property type="glycosylation" value="1 site, No reported glycans"/>
</dbReference>
<dbReference type="Ensembl" id="ENSCHIT00020029908">
    <property type="protein sequence ID" value="ENSCHIP00020022201"/>
    <property type="gene ID" value="ENSCHIG00020014430"/>
</dbReference>
<dbReference type="Ensembl" id="ENSCHIT00040015425">
    <property type="protein sequence ID" value="ENSCHIP00040012077"/>
    <property type="gene ID" value="ENSCHIG00040007089"/>
</dbReference>
<dbReference type="GeneID" id="100860845"/>
<dbReference type="KEGG" id="chx:100860845"/>
<dbReference type="CTD" id="3593"/>
<dbReference type="OrthoDB" id="8670716at2759"/>
<dbReference type="Proteomes" id="UP000291000">
    <property type="component" value="Unassembled WGS sequence"/>
</dbReference>
<dbReference type="Proteomes" id="UP000694566">
    <property type="component" value="Unplaced"/>
</dbReference>
<dbReference type="GO" id="GO:0005615">
    <property type="term" value="C:extracellular space"/>
    <property type="evidence" value="ECO:0007669"/>
    <property type="project" value="UniProtKB-KW"/>
</dbReference>
<dbReference type="GO" id="GO:0016020">
    <property type="term" value="C:membrane"/>
    <property type="evidence" value="ECO:0007669"/>
    <property type="project" value="InterPro"/>
</dbReference>
<dbReference type="GO" id="GO:0005125">
    <property type="term" value="F:cytokine activity"/>
    <property type="evidence" value="ECO:0007669"/>
    <property type="project" value="UniProtKB-KW"/>
</dbReference>
<dbReference type="GO" id="GO:0004896">
    <property type="term" value="F:cytokine receptor activity"/>
    <property type="evidence" value="ECO:0007669"/>
    <property type="project" value="InterPro"/>
</dbReference>
<dbReference type="CDD" id="cd00063">
    <property type="entry name" value="FN3"/>
    <property type="match status" value="1"/>
</dbReference>
<dbReference type="FunFam" id="2.60.40.10:FF:000959">
    <property type="entry name" value="Interleukin-12 subunit beta"/>
    <property type="match status" value="1"/>
</dbReference>
<dbReference type="FunFam" id="2.60.40.10:FF:001008">
    <property type="entry name" value="Interleukin-12 subunit beta"/>
    <property type="match status" value="1"/>
</dbReference>
<dbReference type="FunFam" id="2.60.40.10:FF:001009">
    <property type="entry name" value="Interleukin-12 subunit beta"/>
    <property type="match status" value="1"/>
</dbReference>
<dbReference type="Gene3D" id="2.60.40.10">
    <property type="entry name" value="Immunoglobulins"/>
    <property type="match status" value="3"/>
</dbReference>
<dbReference type="InterPro" id="IPR003961">
    <property type="entry name" value="FN3_dom"/>
</dbReference>
<dbReference type="InterPro" id="IPR036116">
    <property type="entry name" value="FN3_sf"/>
</dbReference>
<dbReference type="InterPro" id="IPR003530">
    <property type="entry name" value="Hematopoietin_rcpt_L_F3_CS"/>
</dbReference>
<dbReference type="InterPro" id="IPR007110">
    <property type="entry name" value="Ig-like_dom"/>
</dbReference>
<dbReference type="InterPro" id="IPR036179">
    <property type="entry name" value="Ig-like_dom_sf"/>
</dbReference>
<dbReference type="InterPro" id="IPR013783">
    <property type="entry name" value="Ig-like_fold"/>
</dbReference>
<dbReference type="InterPro" id="IPR003598">
    <property type="entry name" value="Ig_sub2"/>
</dbReference>
<dbReference type="InterPro" id="IPR050676">
    <property type="entry name" value="IL-12"/>
</dbReference>
<dbReference type="InterPro" id="IPR015528">
    <property type="entry name" value="IL-12_beta"/>
</dbReference>
<dbReference type="InterPro" id="IPR019482">
    <property type="entry name" value="IL-12_beta_cen-dom"/>
</dbReference>
<dbReference type="PANTHER" id="PTHR48485:SF4">
    <property type="entry name" value="INTERLEUKIN-12 SUBUNIT BETA"/>
    <property type="match status" value="1"/>
</dbReference>
<dbReference type="PANTHER" id="PTHR48485">
    <property type="entry name" value="INTERLEUKIN-12 SUBUNIT BETA-RELATED"/>
    <property type="match status" value="1"/>
</dbReference>
<dbReference type="Pfam" id="PF10420">
    <property type="entry name" value="IL12p40_C"/>
    <property type="match status" value="1"/>
</dbReference>
<dbReference type="PIRSF" id="PIRSF038007">
    <property type="entry name" value="IL_12_beta"/>
    <property type="match status" value="1"/>
</dbReference>
<dbReference type="PRINTS" id="PR01928">
    <property type="entry name" value="INTRLEUKN12B"/>
</dbReference>
<dbReference type="SMART" id="SM00408">
    <property type="entry name" value="IGc2"/>
    <property type="match status" value="1"/>
</dbReference>
<dbReference type="SUPFAM" id="SSF49265">
    <property type="entry name" value="Fibronectin type III"/>
    <property type="match status" value="2"/>
</dbReference>
<dbReference type="SUPFAM" id="SSF48726">
    <property type="entry name" value="Immunoglobulin"/>
    <property type="match status" value="1"/>
</dbReference>
<dbReference type="PROSITE" id="PS50853">
    <property type="entry name" value="FN3"/>
    <property type="match status" value="1"/>
</dbReference>
<dbReference type="PROSITE" id="PS01354">
    <property type="entry name" value="HEMATOPO_REC_L_F3"/>
    <property type="match status" value="1"/>
</dbReference>
<dbReference type="PROSITE" id="PS50835">
    <property type="entry name" value="IG_LIKE"/>
    <property type="match status" value="1"/>
</dbReference>
<comment type="function">
    <text evidence="1">Cytokine that can act as a growth factor for activated T and NK cells, enhance the lytic activity of NK/lymphokine-activated killer cells, and stimulate the production of IFN-gamma by resting PBMC.</text>
</comment>
<comment type="function">
    <text evidence="1">Associates with IL23A to form the IL-23 interleukin, a heterodimeric cytokine which functions in innate and adaptive immunity. IL-23 may constitute with IL-17 an acute response to infection in peripheral tissues. IL-23 binds to a heterodimeric receptor complex composed of IL12RB1 and IL23R, activates the Jak-Stat signaling cascade, stimulates memory rather than naive T-cells and promotes production of pro-inflammatory cytokines. IL-23 induces autoimmune inflammation and thus may be responsible for autoimmune inflammatory diseases and may be important for tumorigenesis (By similarity).</text>
</comment>
<comment type="subunit">
    <text evidence="2 3">Heterodimer with IL12A; disulfide-linked. The heterodimer is known as interleukin IL-12. Heterodimer with IL23A; disulfide-linked. The heterodimer is known as interleukin IL-23. Also secreted as a monomer. Interacts with NBR1; this interaction promotes IL-12 secretion (By similarity).</text>
</comment>
<comment type="subcellular location">
    <subcellularLocation>
        <location>Secreted</location>
    </subcellularLocation>
</comment>
<comment type="similarity">
    <text evidence="7">Belongs to the IL-12B family.</text>
</comment>